<sequence>MAREYKIEDYRNFGIMAHIDAGKTTMTERILFYTGKNHKIGETHDGASTMDWMEQEQERGITITSAATTTFWEGRDGRKRRFNIIDTPGHVDFTIEVERSLRVLDGAIALLDANAGVEPQTETVWRQAEKYRVPRMVFVNKMDKIGADFYRSVEMVGSRLGAKALVVQLPIGAENDFEGVVDLVEMKALKWDGSIGAPAVIGEIPSDLKEKAEEYREKLIEMAVEVDEAAMEAYLEGVMPTNEQLVSLIRKGTVEVQFHPVLCGTAFKNKGVQPLLDAVVSYLPSPIDIPAIKGIDVKTEAETTRESSDDAPLSMLAFKIMNDPFVGSLTFCRIYSGKVHKGVSLENTVKKKKERLGRMLQMHSNSREDIEEAFAGDIVALAGLKETTTGDTLCDPLKPVILERMEFPEPVIEIAIEPKTKADQEKMGIALNRLAAEDPSFRVKSDEESGQTIIAGMGELHLDIIVDRMRREFKVEANVGQPQVAYRESITKTAEIDYTHKKQSGGAGQFARVKIVFEPHEGDDFIFESKIVGGAVPKEYIPGVQKGIESVMGSGPLAGFPMLGVKATLIDGGYHDVDSSVLAFEIAARAAFRDGAKKAGAQLLEPIMKVEVVTPDDYVGDVIGDLNSRRGQISGTEARGIATVVNAMVPLANMFGYVNTLRSMSQGRAQYTMQFDHYEPVPSAVALEIQKKYA</sequence>
<organism>
    <name type="scientific">Bartonella tribocorum (strain CIP 105476 / IBS 506)</name>
    <dbReference type="NCBI Taxonomy" id="382640"/>
    <lineage>
        <taxon>Bacteria</taxon>
        <taxon>Pseudomonadati</taxon>
        <taxon>Pseudomonadota</taxon>
        <taxon>Alphaproteobacteria</taxon>
        <taxon>Hyphomicrobiales</taxon>
        <taxon>Bartonellaceae</taxon>
        <taxon>Bartonella</taxon>
    </lineage>
</organism>
<evidence type="ECO:0000255" key="1">
    <source>
        <dbReference type="HAMAP-Rule" id="MF_00054"/>
    </source>
</evidence>
<comment type="function">
    <text evidence="1">Catalyzes the GTP-dependent ribosomal translocation step during translation elongation. During this step, the ribosome changes from the pre-translocational (PRE) to the post-translocational (POST) state as the newly formed A-site-bound peptidyl-tRNA and P-site-bound deacylated tRNA move to the P and E sites, respectively. Catalyzes the coordinated movement of the two tRNA molecules, the mRNA and conformational changes in the ribosome.</text>
</comment>
<comment type="subcellular location">
    <subcellularLocation>
        <location evidence="1">Cytoplasm</location>
    </subcellularLocation>
</comment>
<comment type="similarity">
    <text evidence="1">Belongs to the TRAFAC class translation factor GTPase superfamily. Classic translation factor GTPase family. EF-G/EF-2 subfamily.</text>
</comment>
<proteinExistence type="inferred from homology"/>
<feature type="chain" id="PRO_1000074947" description="Elongation factor G">
    <location>
        <begin position="1"/>
        <end position="694"/>
    </location>
</feature>
<feature type="domain" description="tr-type G">
    <location>
        <begin position="8"/>
        <end position="287"/>
    </location>
</feature>
<feature type="binding site" evidence="1">
    <location>
        <begin position="17"/>
        <end position="24"/>
    </location>
    <ligand>
        <name>GTP</name>
        <dbReference type="ChEBI" id="CHEBI:37565"/>
    </ligand>
</feature>
<feature type="binding site" evidence="1">
    <location>
        <begin position="86"/>
        <end position="90"/>
    </location>
    <ligand>
        <name>GTP</name>
        <dbReference type="ChEBI" id="CHEBI:37565"/>
    </ligand>
</feature>
<feature type="binding site" evidence="1">
    <location>
        <begin position="140"/>
        <end position="143"/>
    </location>
    <ligand>
        <name>GTP</name>
        <dbReference type="ChEBI" id="CHEBI:37565"/>
    </ligand>
</feature>
<reference key="1">
    <citation type="journal article" date="2007" name="Nat. Genet.">
        <title>Genomic analysis of Bartonella identifies type IV secretion systems as host adaptability factors.</title>
        <authorList>
            <person name="Saenz H.L."/>
            <person name="Engel P."/>
            <person name="Stoeckli M.C."/>
            <person name="Lanz C."/>
            <person name="Raddatz G."/>
            <person name="Vayssier-Taussat M."/>
            <person name="Birtles R."/>
            <person name="Schuster S.C."/>
            <person name="Dehio C."/>
        </authorList>
    </citation>
    <scope>NUCLEOTIDE SEQUENCE [LARGE SCALE GENOMIC DNA]</scope>
    <source>
        <strain>CIP 105476 / IBS 506</strain>
    </source>
</reference>
<accession>A9IW31</accession>
<protein>
    <recommendedName>
        <fullName evidence="1">Elongation factor G</fullName>
        <shortName evidence="1">EF-G</shortName>
    </recommendedName>
</protein>
<gene>
    <name evidence="1" type="primary">fusA</name>
    <name type="ordered locus">BT_1521</name>
</gene>
<keyword id="KW-0963">Cytoplasm</keyword>
<keyword id="KW-0251">Elongation factor</keyword>
<keyword id="KW-0342">GTP-binding</keyword>
<keyword id="KW-0547">Nucleotide-binding</keyword>
<keyword id="KW-0648">Protein biosynthesis</keyword>
<dbReference type="EMBL" id="AM260525">
    <property type="protein sequence ID" value="CAK01867.1"/>
    <property type="molecule type" value="Genomic_DNA"/>
</dbReference>
<dbReference type="RefSeq" id="WP_012231998.1">
    <property type="nucleotide sequence ID" value="NC_010161.1"/>
</dbReference>
<dbReference type="SMR" id="A9IW31"/>
<dbReference type="KEGG" id="btr:BT_1521"/>
<dbReference type="eggNOG" id="COG0480">
    <property type="taxonomic scope" value="Bacteria"/>
</dbReference>
<dbReference type="HOGENOM" id="CLU_002794_4_1_5"/>
<dbReference type="Proteomes" id="UP000001592">
    <property type="component" value="Chromosome"/>
</dbReference>
<dbReference type="GO" id="GO:0005737">
    <property type="term" value="C:cytoplasm"/>
    <property type="evidence" value="ECO:0007669"/>
    <property type="project" value="UniProtKB-SubCell"/>
</dbReference>
<dbReference type="GO" id="GO:0005525">
    <property type="term" value="F:GTP binding"/>
    <property type="evidence" value="ECO:0007669"/>
    <property type="project" value="UniProtKB-UniRule"/>
</dbReference>
<dbReference type="GO" id="GO:0003924">
    <property type="term" value="F:GTPase activity"/>
    <property type="evidence" value="ECO:0007669"/>
    <property type="project" value="InterPro"/>
</dbReference>
<dbReference type="GO" id="GO:0097216">
    <property type="term" value="F:guanosine tetraphosphate binding"/>
    <property type="evidence" value="ECO:0007669"/>
    <property type="project" value="UniProtKB-ARBA"/>
</dbReference>
<dbReference type="GO" id="GO:0003746">
    <property type="term" value="F:translation elongation factor activity"/>
    <property type="evidence" value="ECO:0007669"/>
    <property type="project" value="UniProtKB-UniRule"/>
</dbReference>
<dbReference type="GO" id="GO:0032790">
    <property type="term" value="P:ribosome disassembly"/>
    <property type="evidence" value="ECO:0007669"/>
    <property type="project" value="TreeGrafter"/>
</dbReference>
<dbReference type="CDD" id="cd01886">
    <property type="entry name" value="EF-G"/>
    <property type="match status" value="1"/>
</dbReference>
<dbReference type="CDD" id="cd16262">
    <property type="entry name" value="EFG_III"/>
    <property type="match status" value="1"/>
</dbReference>
<dbReference type="CDD" id="cd01434">
    <property type="entry name" value="EFG_mtEFG1_IV"/>
    <property type="match status" value="1"/>
</dbReference>
<dbReference type="CDD" id="cd03713">
    <property type="entry name" value="EFG_mtEFG_C"/>
    <property type="match status" value="1"/>
</dbReference>
<dbReference type="CDD" id="cd04088">
    <property type="entry name" value="EFG_mtEFG_II"/>
    <property type="match status" value="1"/>
</dbReference>
<dbReference type="FunFam" id="2.40.30.10:FF:000006">
    <property type="entry name" value="Elongation factor G"/>
    <property type="match status" value="1"/>
</dbReference>
<dbReference type="FunFam" id="3.30.230.10:FF:000003">
    <property type="entry name" value="Elongation factor G"/>
    <property type="match status" value="1"/>
</dbReference>
<dbReference type="FunFam" id="3.30.70.240:FF:000001">
    <property type="entry name" value="Elongation factor G"/>
    <property type="match status" value="1"/>
</dbReference>
<dbReference type="FunFam" id="3.30.70.870:FF:000001">
    <property type="entry name" value="Elongation factor G"/>
    <property type="match status" value="1"/>
</dbReference>
<dbReference type="FunFam" id="3.40.50.300:FF:000029">
    <property type="entry name" value="Elongation factor G"/>
    <property type="match status" value="1"/>
</dbReference>
<dbReference type="Gene3D" id="3.30.230.10">
    <property type="match status" value="1"/>
</dbReference>
<dbReference type="Gene3D" id="3.30.70.240">
    <property type="match status" value="1"/>
</dbReference>
<dbReference type="Gene3D" id="3.30.70.870">
    <property type="entry name" value="Elongation Factor G (Translational Gtpase), domain 3"/>
    <property type="match status" value="1"/>
</dbReference>
<dbReference type="Gene3D" id="3.40.50.300">
    <property type="entry name" value="P-loop containing nucleotide triphosphate hydrolases"/>
    <property type="match status" value="1"/>
</dbReference>
<dbReference type="Gene3D" id="2.40.30.10">
    <property type="entry name" value="Translation factors"/>
    <property type="match status" value="1"/>
</dbReference>
<dbReference type="HAMAP" id="MF_00054_B">
    <property type="entry name" value="EF_G_EF_2_B"/>
    <property type="match status" value="1"/>
</dbReference>
<dbReference type="InterPro" id="IPR041095">
    <property type="entry name" value="EFG_II"/>
</dbReference>
<dbReference type="InterPro" id="IPR009022">
    <property type="entry name" value="EFG_III"/>
</dbReference>
<dbReference type="InterPro" id="IPR035647">
    <property type="entry name" value="EFG_III/V"/>
</dbReference>
<dbReference type="InterPro" id="IPR047872">
    <property type="entry name" value="EFG_IV"/>
</dbReference>
<dbReference type="InterPro" id="IPR035649">
    <property type="entry name" value="EFG_V"/>
</dbReference>
<dbReference type="InterPro" id="IPR000640">
    <property type="entry name" value="EFG_V-like"/>
</dbReference>
<dbReference type="InterPro" id="IPR004161">
    <property type="entry name" value="EFTu-like_2"/>
</dbReference>
<dbReference type="InterPro" id="IPR031157">
    <property type="entry name" value="G_TR_CS"/>
</dbReference>
<dbReference type="InterPro" id="IPR027417">
    <property type="entry name" value="P-loop_NTPase"/>
</dbReference>
<dbReference type="InterPro" id="IPR020568">
    <property type="entry name" value="Ribosomal_Su5_D2-typ_SF"/>
</dbReference>
<dbReference type="InterPro" id="IPR014721">
    <property type="entry name" value="Ribsml_uS5_D2-typ_fold_subgr"/>
</dbReference>
<dbReference type="InterPro" id="IPR005225">
    <property type="entry name" value="Small_GTP-bd"/>
</dbReference>
<dbReference type="InterPro" id="IPR000795">
    <property type="entry name" value="T_Tr_GTP-bd_dom"/>
</dbReference>
<dbReference type="InterPro" id="IPR009000">
    <property type="entry name" value="Transl_B-barrel_sf"/>
</dbReference>
<dbReference type="InterPro" id="IPR004540">
    <property type="entry name" value="Transl_elong_EFG/EF2"/>
</dbReference>
<dbReference type="InterPro" id="IPR005517">
    <property type="entry name" value="Transl_elong_EFG/EF2_IV"/>
</dbReference>
<dbReference type="NCBIfam" id="TIGR00484">
    <property type="entry name" value="EF-G"/>
    <property type="match status" value="1"/>
</dbReference>
<dbReference type="NCBIfam" id="NF009381">
    <property type="entry name" value="PRK12740.1-5"/>
    <property type="match status" value="1"/>
</dbReference>
<dbReference type="NCBIfam" id="TIGR00231">
    <property type="entry name" value="small_GTP"/>
    <property type="match status" value="1"/>
</dbReference>
<dbReference type="PANTHER" id="PTHR43261:SF1">
    <property type="entry name" value="RIBOSOME-RELEASING FACTOR 2, MITOCHONDRIAL"/>
    <property type="match status" value="1"/>
</dbReference>
<dbReference type="PANTHER" id="PTHR43261">
    <property type="entry name" value="TRANSLATION ELONGATION FACTOR G-RELATED"/>
    <property type="match status" value="1"/>
</dbReference>
<dbReference type="Pfam" id="PF00679">
    <property type="entry name" value="EFG_C"/>
    <property type="match status" value="1"/>
</dbReference>
<dbReference type="Pfam" id="PF14492">
    <property type="entry name" value="EFG_III"/>
    <property type="match status" value="1"/>
</dbReference>
<dbReference type="Pfam" id="PF03764">
    <property type="entry name" value="EFG_IV"/>
    <property type="match status" value="1"/>
</dbReference>
<dbReference type="Pfam" id="PF00009">
    <property type="entry name" value="GTP_EFTU"/>
    <property type="match status" value="1"/>
</dbReference>
<dbReference type="Pfam" id="PF03144">
    <property type="entry name" value="GTP_EFTU_D2"/>
    <property type="match status" value="1"/>
</dbReference>
<dbReference type="PRINTS" id="PR00315">
    <property type="entry name" value="ELONGATNFCT"/>
</dbReference>
<dbReference type="SMART" id="SM00838">
    <property type="entry name" value="EFG_C"/>
    <property type="match status" value="1"/>
</dbReference>
<dbReference type="SMART" id="SM00889">
    <property type="entry name" value="EFG_IV"/>
    <property type="match status" value="1"/>
</dbReference>
<dbReference type="SUPFAM" id="SSF54980">
    <property type="entry name" value="EF-G C-terminal domain-like"/>
    <property type="match status" value="2"/>
</dbReference>
<dbReference type="SUPFAM" id="SSF52540">
    <property type="entry name" value="P-loop containing nucleoside triphosphate hydrolases"/>
    <property type="match status" value="1"/>
</dbReference>
<dbReference type="SUPFAM" id="SSF54211">
    <property type="entry name" value="Ribosomal protein S5 domain 2-like"/>
    <property type="match status" value="1"/>
</dbReference>
<dbReference type="SUPFAM" id="SSF50447">
    <property type="entry name" value="Translation proteins"/>
    <property type="match status" value="1"/>
</dbReference>
<dbReference type="PROSITE" id="PS00301">
    <property type="entry name" value="G_TR_1"/>
    <property type="match status" value="1"/>
</dbReference>
<dbReference type="PROSITE" id="PS51722">
    <property type="entry name" value="G_TR_2"/>
    <property type="match status" value="1"/>
</dbReference>
<name>EFG_BART1</name>